<reference key="1">
    <citation type="journal article" date="2000" name="DNA Res.">
        <title>Structural analysis of Arabidopsis thaliana chromosome 3. I. Sequence features of the regions of 4,504,864 bp covered by sixty P1 and TAC clones.</title>
        <authorList>
            <person name="Sato S."/>
            <person name="Nakamura Y."/>
            <person name="Kaneko T."/>
            <person name="Katoh T."/>
            <person name="Asamizu E."/>
            <person name="Tabata S."/>
        </authorList>
    </citation>
    <scope>NUCLEOTIDE SEQUENCE [LARGE SCALE GENOMIC DNA]</scope>
    <source>
        <strain>cv. Columbia</strain>
    </source>
</reference>
<reference key="2">
    <citation type="journal article" date="2017" name="Plant J.">
        <title>Araport11: a complete reannotation of the Arabidopsis thaliana reference genome.</title>
        <authorList>
            <person name="Cheng C.Y."/>
            <person name="Krishnakumar V."/>
            <person name="Chan A.P."/>
            <person name="Thibaud-Nissen F."/>
            <person name="Schobel S."/>
            <person name="Town C.D."/>
        </authorList>
    </citation>
    <scope>GENOME REANNOTATION</scope>
    <source>
        <strain>cv. Columbia</strain>
    </source>
</reference>
<reference key="3">
    <citation type="journal article" date="2003" name="Science">
        <title>Empirical analysis of transcriptional activity in the Arabidopsis genome.</title>
        <authorList>
            <person name="Yamada K."/>
            <person name="Lim J."/>
            <person name="Dale J.M."/>
            <person name="Chen H."/>
            <person name="Shinn P."/>
            <person name="Palm C.J."/>
            <person name="Southwick A.M."/>
            <person name="Wu H.C."/>
            <person name="Kim C.J."/>
            <person name="Nguyen M."/>
            <person name="Pham P.K."/>
            <person name="Cheuk R.F."/>
            <person name="Karlin-Newmann G."/>
            <person name="Liu S.X."/>
            <person name="Lam B."/>
            <person name="Sakano H."/>
            <person name="Wu T."/>
            <person name="Yu G."/>
            <person name="Miranda M."/>
            <person name="Quach H.L."/>
            <person name="Tripp M."/>
            <person name="Chang C.H."/>
            <person name="Lee J.M."/>
            <person name="Toriumi M.J."/>
            <person name="Chan M.M."/>
            <person name="Tang C.C."/>
            <person name="Onodera C.S."/>
            <person name="Deng J.M."/>
            <person name="Akiyama K."/>
            <person name="Ansari Y."/>
            <person name="Arakawa T."/>
            <person name="Banh J."/>
            <person name="Banno F."/>
            <person name="Bowser L."/>
            <person name="Brooks S.Y."/>
            <person name="Carninci P."/>
            <person name="Chao Q."/>
            <person name="Choy N."/>
            <person name="Enju A."/>
            <person name="Goldsmith A.D."/>
            <person name="Gurjal M."/>
            <person name="Hansen N.F."/>
            <person name="Hayashizaki Y."/>
            <person name="Johnson-Hopson C."/>
            <person name="Hsuan V.W."/>
            <person name="Iida K."/>
            <person name="Karnes M."/>
            <person name="Khan S."/>
            <person name="Koesema E."/>
            <person name="Ishida J."/>
            <person name="Jiang P.X."/>
            <person name="Jones T."/>
            <person name="Kawai J."/>
            <person name="Kamiya A."/>
            <person name="Meyers C."/>
            <person name="Nakajima M."/>
            <person name="Narusaka M."/>
            <person name="Seki M."/>
            <person name="Sakurai T."/>
            <person name="Satou M."/>
            <person name="Tamse R."/>
            <person name="Vaysberg M."/>
            <person name="Wallender E.K."/>
            <person name="Wong C."/>
            <person name="Yamamura Y."/>
            <person name="Yuan S."/>
            <person name="Shinozaki K."/>
            <person name="Davis R.W."/>
            <person name="Theologis A."/>
            <person name="Ecker J.R."/>
        </authorList>
    </citation>
    <scope>NUCLEOTIDE SEQUENCE [LARGE SCALE MRNA]</scope>
    <source>
        <strain>cv. Columbia</strain>
    </source>
</reference>
<reference key="4">
    <citation type="journal article" date="2004" name="Plant Cell">
        <title>Genome-wide analysis of Arabidopsis pentatricopeptide repeat proteins reveals their essential role in organelle biogenesis.</title>
        <authorList>
            <person name="Lurin C."/>
            <person name="Andres C."/>
            <person name="Aubourg S."/>
            <person name="Bellaoui M."/>
            <person name="Bitton F."/>
            <person name="Bruyere C."/>
            <person name="Caboche M."/>
            <person name="Debast C."/>
            <person name="Gualberto J."/>
            <person name="Hoffmann B."/>
            <person name="Lecharny A."/>
            <person name="Le Ret M."/>
            <person name="Martin-Magniette M.-L."/>
            <person name="Mireau H."/>
            <person name="Peeters N."/>
            <person name="Renou J.-P."/>
            <person name="Szurek B."/>
            <person name="Taconnat L."/>
            <person name="Small I."/>
        </authorList>
    </citation>
    <scope>GENE FAMILY</scope>
</reference>
<reference key="5">
    <citation type="journal article" date="2015" name="J. Exp. Bot.">
        <title>Identification of cleavage sites and substrate proteins for two mitochondrial intermediate peptidases in Arabidopsis thaliana.</title>
        <authorList>
            <person name="Carrie C."/>
            <person name="Venne A.S."/>
            <person name="Zahedi R.P."/>
            <person name="Soll J."/>
        </authorList>
    </citation>
    <scope>IDENTIFICATION BY MASS SPECTROMETRY</scope>
    <scope>CLEAVAGE OF TRANSIT PEPTIDE AFTER LEU-71</scope>
</reference>
<proteinExistence type="evidence at protein level"/>
<name>PP234_ARATH</name>
<protein>
    <recommendedName>
        <fullName>Pentatricopeptide repeat-containing protein At3g15590, mitochondrial</fullName>
    </recommendedName>
</protein>
<comment type="subcellular location">
    <subcellularLocation>
        <location evidence="4">Mitochondrion</location>
    </subcellularLocation>
</comment>
<comment type="similarity">
    <text evidence="3">Belongs to the PPR family. P subfamily.</text>
</comment>
<comment type="online information" name="Pentatricopeptide repeat proteins">
    <link uri="https://ppr.plantenergy.uwa.edu.au"/>
</comment>
<sequence length="610" mass="69394">MYSLSRILQRSQRYNFAPSSFGAVSKLEVSSGGDKERVFKSFGLIYSKPQGLVRLYSARDVFSRFFGIHKLSSIADAKDKGDEVVREEELSESEEAVPVSGDVPEGVVDDDSLFEPELGSDNDDLEIEEKHSKDGGKPTKKRGQSELYESIVAYKSVKHVLEKWVKEGKDLSQAEVTLAIHNLRKRKSYAMCLQLWEWLGANTQFEFTEANYASQLDLVAKVHSLQKAEIFLKDIPESSRGEVVYRTLLANCVLKHHVNKAEDIFNKMKELKFPTSVFACNQLLLLYSMHDRKKISDVLLLMERENIKPSRATYHFLINSKGLAGDITGMEKIVETIKEEGIELDPELQSILAKYYIRAGLKERAQDLMKEIEGKGLQQTPWVCRSLLPLYADIGDSDNVRRLSRFVDQNPRYDNCISAIKAWGKLKEVEEAEAVFERLVEKYKIFPMMPYFALMEIYTENKMLAKGRDLVKRMGNAGIAIGPSTWHALVKLYIKAGEVGKAELILNRATKDNKMRPMFTTYMAILEEYAKRGDVHNTEKVFMKMKRASYAAQLMQYETVLLAYINAKTPAYGMIERMKADNVFPNKSLAAKLAQVNPFKKCPVSVLLDI</sequence>
<gene>
    <name type="ordered locus">At3g15590</name>
    <name type="ORF">MQD17.5</name>
</gene>
<dbReference type="EMBL" id="AB028619">
    <property type="protein sequence ID" value="BAB01348.1"/>
    <property type="molecule type" value="Genomic_DNA"/>
</dbReference>
<dbReference type="EMBL" id="CP002686">
    <property type="protein sequence ID" value="AEE75696.1"/>
    <property type="molecule type" value="Genomic_DNA"/>
</dbReference>
<dbReference type="EMBL" id="CP002686">
    <property type="protein sequence ID" value="ANM65597.1"/>
    <property type="molecule type" value="Genomic_DNA"/>
</dbReference>
<dbReference type="EMBL" id="AY102108">
    <property type="protein sequence ID" value="AAM26678.1"/>
    <property type="molecule type" value="mRNA"/>
</dbReference>
<dbReference type="EMBL" id="BT002636">
    <property type="protein sequence ID" value="AAO11552.1"/>
    <property type="molecule type" value="mRNA"/>
</dbReference>
<dbReference type="RefSeq" id="NP_001327555.1">
    <property type="nucleotide sequence ID" value="NM_001338178.1"/>
</dbReference>
<dbReference type="RefSeq" id="NP_188178.2">
    <property type="nucleotide sequence ID" value="NM_112427.5"/>
</dbReference>
<dbReference type="SMR" id="Q9LRP6"/>
<dbReference type="FunCoup" id="Q9LRP6">
    <property type="interactions" value="206"/>
</dbReference>
<dbReference type="iPTMnet" id="Q9LRP6"/>
<dbReference type="SwissPalm" id="Q9LRP6"/>
<dbReference type="PaxDb" id="3702-AT3G15590.1"/>
<dbReference type="ProteomicsDB" id="248948"/>
<dbReference type="EnsemblPlants" id="AT3G15590.1">
    <property type="protein sequence ID" value="AT3G15590.1"/>
    <property type="gene ID" value="AT3G15590"/>
</dbReference>
<dbReference type="EnsemblPlants" id="AT3G15590.2">
    <property type="protein sequence ID" value="AT3G15590.2"/>
    <property type="gene ID" value="AT3G15590"/>
</dbReference>
<dbReference type="GeneID" id="820799"/>
<dbReference type="Gramene" id="AT3G15590.1">
    <property type="protein sequence ID" value="AT3G15590.1"/>
    <property type="gene ID" value="AT3G15590"/>
</dbReference>
<dbReference type="Gramene" id="AT3G15590.2">
    <property type="protein sequence ID" value="AT3G15590.2"/>
    <property type="gene ID" value="AT3G15590"/>
</dbReference>
<dbReference type="KEGG" id="ath:AT3G15590"/>
<dbReference type="Araport" id="AT3G15590"/>
<dbReference type="TAIR" id="AT3G15590"/>
<dbReference type="eggNOG" id="KOG4197">
    <property type="taxonomic scope" value="Eukaryota"/>
</dbReference>
<dbReference type="HOGENOM" id="CLU_019802_1_0_1"/>
<dbReference type="InParanoid" id="Q9LRP6"/>
<dbReference type="OMA" id="GANTQFE"/>
<dbReference type="PhylomeDB" id="Q9LRP6"/>
<dbReference type="PRO" id="PR:Q9LRP6"/>
<dbReference type="Proteomes" id="UP000006548">
    <property type="component" value="Chromosome 3"/>
</dbReference>
<dbReference type="ExpressionAtlas" id="Q9LRP6">
    <property type="expression patterns" value="baseline and differential"/>
</dbReference>
<dbReference type="GO" id="GO:0005739">
    <property type="term" value="C:mitochondrion"/>
    <property type="evidence" value="ECO:0007005"/>
    <property type="project" value="TAIR"/>
</dbReference>
<dbReference type="GO" id="GO:0003729">
    <property type="term" value="F:mRNA binding"/>
    <property type="evidence" value="ECO:0000314"/>
    <property type="project" value="TAIR"/>
</dbReference>
<dbReference type="FunFam" id="1.25.40.10:FF:000394">
    <property type="entry name" value="Pentatricopeptide repeat-containing protein, mitochondrial"/>
    <property type="match status" value="1"/>
</dbReference>
<dbReference type="Gene3D" id="1.25.40.10">
    <property type="entry name" value="Tetratricopeptide repeat domain"/>
    <property type="match status" value="2"/>
</dbReference>
<dbReference type="InterPro" id="IPR002885">
    <property type="entry name" value="Pentatricopeptide_rpt"/>
</dbReference>
<dbReference type="InterPro" id="IPR011990">
    <property type="entry name" value="TPR-like_helical_dom_sf"/>
</dbReference>
<dbReference type="NCBIfam" id="TIGR00756">
    <property type="entry name" value="PPR"/>
    <property type="match status" value="1"/>
</dbReference>
<dbReference type="PANTHER" id="PTHR45717">
    <property type="entry name" value="OS12G0527900 PROTEIN"/>
    <property type="match status" value="1"/>
</dbReference>
<dbReference type="PANTHER" id="PTHR45717:SF26">
    <property type="entry name" value="PENTACOTRIPEPTIDE-REPEAT REGION OF PRORP DOMAIN-CONTAINING PROTEIN"/>
    <property type="match status" value="1"/>
</dbReference>
<dbReference type="Pfam" id="PF01535">
    <property type="entry name" value="PPR"/>
    <property type="match status" value="2"/>
</dbReference>
<dbReference type="Pfam" id="PF13812">
    <property type="entry name" value="PPR_3"/>
    <property type="match status" value="2"/>
</dbReference>
<dbReference type="SUPFAM" id="SSF48452">
    <property type="entry name" value="TPR-like"/>
    <property type="match status" value="1"/>
</dbReference>
<feature type="transit peptide" description="Mitochondrion" evidence="2">
    <location>
        <begin position="1"/>
        <end position="71"/>
    </location>
</feature>
<feature type="chain" id="PRO_0000356093" description="Pentatricopeptide repeat-containing protein At3g15590, mitochondrial">
    <location>
        <begin position="72"/>
        <end position="610"/>
    </location>
</feature>
<feature type="repeat" description="PPR 1">
    <location>
        <begin position="241"/>
        <end position="275"/>
    </location>
</feature>
<feature type="repeat" description="PPR 2">
    <location>
        <begin position="276"/>
        <end position="309"/>
    </location>
</feature>
<feature type="repeat" description="PPR 3">
    <location>
        <begin position="310"/>
        <end position="344"/>
    </location>
</feature>
<feature type="repeat" description="PPR 4">
    <location>
        <begin position="345"/>
        <end position="379"/>
    </location>
</feature>
<feature type="repeat" description="PPR 5">
    <location>
        <begin position="380"/>
        <end position="410"/>
    </location>
</feature>
<feature type="repeat" description="PPR 6">
    <location>
        <begin position="412"/>
        <end position="442"/>
    </location>
</feature>
<feature type="repeat" description="PPR 7">
    <location>
        <begin position="447"/>
        <end position="481"/>
    </location>
</feature>
<feature type="repeat" description="PPR 8">
    <location>
        <begin position="482"/>
        <end position="517"/>
    </location>
</feature>
<feature type="repeat" description="PPR 9">
    <location>
        <begin position="518"/>
        <end position="552"/>
    </location>
</feature>
<feature type="region of interest" description="Disordered" evidence="1">
    <location>
        <begin position="88"/>
        <end position="142"/>
    </location>
</feature>
<feature type="compositionally biased region" description="Acidic residues" evidence="1">
    <location>
        <begin position="107"/>
        <end position="127"/>
    </location>
</feature>
<feature type="compositionally biased region" description="Basic and acidic residues" evidence="1">
    <location>
        <begin position="128"/>
        <end position="137"/>
    </location>
</feature>
<organism>
    <name type="scientific">Arabidopsis thaliana</name>
    <name type="common">Mouse-ear cress</name>
    <dbReference type="NCBI Taxonomy" id="3702"/>
    <lineage>
        <taxon>Eukaryota</taxon>
        <taxon>Viridiplantae</taxon>
        <taxon>Streptophyta</taxon>
        <taxon>Embryophyta</taxon>
        <taxon>Tracheophyta</taxon>
        <taxon>Spermatophyta</taxon>
        <taxon>Magnoliopsida</taxon>
        <taxon>eudicotyledons</taxon>
        <taxon>Gunneridae</taxon>
        <taxon>Pentapetalae</taxon>
        <taxon>rosids</taxon>
        <taxon>malvids</taxon>
        <taxon>Brassicales</taxon>
        <taxon>Brassicaceae</taxon>
        <taxon>Camelineae</taxon>
        <taxon>Arabidopsis</taxon>
    </lineage>
</organism>
<evidence type="ECO:0000256" key="1">
    <source>
        <dbReference type="SAM" id="MobiDB-lite"/>
    </source>
</evidence>
<evidence type="ECO:0000269" key="2">
    <source>
    </source>
</evidence>
<evidence type="ECO:0000305" key="3"/>
<evidence type="ECO:0000305" key="4">
    <source>
    </source>
</evidence>
<keyword id="KW-0496">Mitochondrion</keyword>
<keyword id="KW-1185">Reference proteome</keyword>
<keyword id="KW-0677">Repeat</keyword>
<keyword id="KW-0809">Transit peptide</keyword>
<accession>Q9LRP6</accession>